<keyword id="KW-1185">Reference proteome</keyword>
<keyword id="KW-0687">Ribonucleoprotein</keyword>
<keyword id="KW-0689">Ribosomal protein</keyword>
<keyword id="KW-0694">RNA-binding</keyword>
<keyword id="KW-0699">rRNA-binding</keyword>
<protein>
    <recommendedName>
        <fullName evidence="1">Large ribosomal subunit protein uL15</fullName>
    </recommendedName>
    <alternativeName>
        <fullName evidence="3">50S ribosomal protein L15</fullName>
    </alternativeName>
</protein>
<comment type="function">
    <text evidence="1">Binds to the 23S rRNA.</text>
</comment>
<comment type="subunit">
    <text evidence="1">Part of the 50S ribosomal subunit.</text>
</comment>
<comment type="similarity">
    <text evidence="1">Belongs to the universal ribosomal protein uL15 family.</text>
</comment>
<sequence>MKLHELKPAEGSRKVRNRVGRGAATGNGKTSGRGQKGQKARSGGSVRPGFEGGQLPLFRRLPKRGFTNINRKEYAIVNLDQLNKFEDGTEVTPALLVESGVVKSEKSGIKILGTGSLDKKLTVKASKFSASAAEAIDAKGGAHEVI</sequence>
<organism>
    <name type="scientific">Staphylococcus saprophyticus subsp. saprophyticus (strain ATCC 15305 / DSM 20229 / NCIMB 8711 / NCTC 7292 / S-41)</name>
    <dbReference type="NCBI Taxonomy" id="342451"/>
    <lineage>
        <taxon>Bacteria</taxon>
        <taxon>Bacillati</taxon>
        <taxon>Bacillota</taxon>
        <taxon>Bacilli</taxon>
        <taxon>Bacillales</taxon>
        <taxon>Staphylococcaceae</taxon>
        <taxon>Staphylococcus</taxon>
    </lineage>
</organism>
<proteinExistence type="inferred from homology"/>
<dbReference type="EMBL" id="AP008934">
    <property type="protein sequence ID" value="BAE17827.1"/>
    <property type="molecule type" value="Genomic_DNA"/>
</dbReference>
<dbReference type="RefSeq" id="WP_002482631.1">
    <property type="nucleotide sequence ID" value="NZ_MTGA01000036.1"/>
</dbReference>
<dbReference type="SMR" id="Q49ZE9"/>
<dbReference type="GeneID" id="66866829"/>
<dbReference type="KEGG" id="ssp:SSP0682"/>
<dbReference type="eggNOG" id="COG0200">
    <property type="taxonomic scope" value="Bacteria"/>
</dbReference>
<dbReference type="HOGENOM" id="CLU_055188_4_2_9"/>
<dbReference type="OrthoDB" id="9810293at2"/>
<dbReference type="Proteomes" id="UP000006371">
    <property type="component" value="Chromosome"/>
</dbReference>
<dbReference type="GO" id="GO:0022625">
    <property type="term" value="C:cytosolic large ribosomal subunit"/>
    <property type="evidence" value="ECO:0007669"/>
    <property type="project" value="TreeGrafter"/>
</dbReference>
<dbReference type="GO" id="GO:0019843">
    <property type="term" value="F:rRNA binding"/>
    <property type="evidence" value="ECO:0007669"/>
    <property type="project" value="UniProtKB-UniRule"/>
</dbReference>
<dbReference type="GO" id="GO:0003735">
    <property type="term" value="F:structural constituent of ribosome"/>
    <property type="evidence" value="ECO:0007669"/>
    <property type="project" value="InterPro"/>
</dbReference>
<dbReference type="GO" id="GO:0006412">
    <property type="term" value="P:translation"/>
    <property type="evidence" value="ECO:0007669"/>
    <property type="project" value="UniProtKB-UniRule"/>
</dbReference>
<dbReference type="FunFam" id="3.100.10.10:FF:000004">
    <property type="entry name" value="50S ribosomal protein L15"/>
    <property type="match status" value="1"/>
</dbReference>
<dbReference type="Gene3D" id="3.100.10.10">
    <property type="match status" value="1"/>
</dbReference>
<dbReference type="HAMAP" id="MF_01341">
    <property type="entry name" value="Ribosomal_uL15"/>
    <property type="match status" value="1"/>
</dbReference>
<dbReference type="InterPro" id="IPR030878">
    <property type="entry name" value="Ribosomal_uL15"/>
</dbReference>
<dbReference type="InterPro" id="IPR021131">
    <property type="entry name" value="Ribosomal_uL15/eL18"/>
</dbReference>
<dbReference type="InterPro" id="IPR036227">
    <property type="entry name" value="Ribosomal_uL15/eL18_sf"/>
</dbReference>
<dbReference type="InterPro" id="IPR005749">
    <property type="entry name" value="Ribosomal_uL15_bac-type"/>
</dbReference>
<dbReference type="InterPro" id="IPR001196">
    <property type="entry name" value="Ribosomal_uL15_CS"/>
</dbReference>
<dbReference type="NCBIfam" id="TIGR01071">
    <property type="entry name" value="rplO_bact"/>
    <property type="match status" value="1"/>
</dbReference>
<dbReference type="PANTHER" id="PTHR12934">
    <property type="entry name" value="50S RIBOSOMAL PROTEIN L15"/>
    <property type="match status" value="1"/>
</dbReference>
<dbReference type="PANTHER" id="PTHR12934:SF11">
    <property type="entry name" value="LARGE RIBOSOMAL SUBUNIT PROTEIN UL15M"/>
    <property type="match status" value="1"/>
</dbReference>
<dbReference type="Pfam" id="PF00828">
    <property type="entry name" value="Ribosomal_L27A"/>
    <property type="match status" value="1"/>
</dbReference>
<dbReference type="SUPFAM" id="SSF52080">
    <property type="entry name" value="Ribosomal proteins L15p and L18e"/>
    <property type="match status" value="1"/>
</dbReference>
<dbReference type="PROSITE" id="PS00475">
    <property type="entry name" value="RIBOSOMAL_L15"/>
    <property type="match status" value="1"/>
</dbReference>
<reference key="1">
    <citation type="journal article" date="2005" name="Proc. Natl. Acad. Sci. U.S.A.">
        <title>Whole genome sequence of Staphylococcus saprophyticus reveals the pathogenesis of uncomplicated urinary tract infection.</title>
        <authorList>
            <person name="Kuroda M."/>
            <person name="Yamashita A."/>
            <person name="Hirakawa H."/>
            <person name="Kumano M."/>
            <person name="Morikawa K."/>
            <person name="Higashide M."/>
            <person name="Maruyama A."/>
            <person name="Inose Y."/>
            <person name="Matoba K."/>
            <person name="Toh H."/>
            <person name="Kuhara S."/>
            <person name="Hattori M."/>
            <person name="Ohta T."/>
        </authorList>
    </citation>
    <scope>NUCLEOTIDE SEQUENCE [LARGE SCALE GENOMIC DNA]</scope>
    <source>
        <strain>ATCC 15305 / DSM 20229 / NCIMB 8711 / NCTC 7292 / S-41</strain>
    </source>
</reference>
<name>RL15_STAS1</name>
<accession>Q49ZE9</accession>
<evidence type="ECO:0000255" key="1">
    <source>
        <dbReference type="HAMAP-Rule" id="MF_01341"/>
    </source>
</evidence>
<evidence type="ECO:0000256" key="2">
    <source>
        <dbReference type="SAM" id="MobiDB-lite"/>
    </source>
</evidence>
<evidence type="ECO:0000305" key="3"/>
<gene>
    <name evidence="1" type="primary">rplO</name>
    <name type="ordered locus">SSP0682</name>
</gene>
<feature type="chain" id="PRO_0000104818" description="Large ribosomal subunit protein uL15">
    <location>
        <begin position="1"/>
        <end position="146"/>
    </location>
</feature>
<feature type="region of interest" description="Disordered" evidence="2">
    <location>
        <begin position="1"/>
        <end position="56"/>
    </location>
</feature>
<feature type="compositionally biased region" description="Basic and acidic residues" evidence="2">
    <location>
        <begin position="1"/>
        <end position="13"/>
    </location>
</feature>
<feature type="compositionally biased region" description="Gly residues" evidence="2">
    <location>
        <begin position="23"/>
        <end position="35"/>
    </location>
</feature>